<protein>
    <recommendedName>
        <fullName evidence="1">5'-nucleotidase SurE</fullName>
        <ecNumber evidence="1">3.1.3.5</ecNumber>
    </recommendedName>
    <alternativeName>
        <fullName evidence="1">Nucleoside 5'-monophosphate phosphohydrolase</fullName>
    </alternativeName>
</protein>
<sequence>MRILLSNDDGYLAPGLAALYEALRPLAEILVMAPEQNCSGASNSLTLSRPLSVSRSAATGFYYVNGTPTDSVHVALTGMLDTKPDLVVSGINNGQNMGDDTLYSGTVAAATEGIMFGVPAIAFSLVHKEWAHLGDAARVAAEIVRHYLDHPLPGQPLLNVNIPNLPYEELKGWRVTRLGKRHPSQPVIRQTNPRGEPIYWIGAAGDALDASEGTDFHATASGYVSITPLQLDLTHTQMLGATRDWARAGSGAS</sequence>
<feature type="chain" id="PRO_1000007708" description="5'-nucleotidase SurE">
    <location>
        <begin position="1"/>
        <end position="253"/>
    </location>
</feature>
<feature type="binding site" evidence="1">
    <location>
        <position position="8"/>
    </location>
    <ligand>
        <name>a divalent metal cation</name>
        <dbReference type="ChEBI" id="CHEBI:60240"/>
    </ligand>
</feature>
<feature type="binding site" evidence="1">
    <location>
        <position position="9"/>
    </location>
    <ligand>
        <name>a divalent metal cation</name>
        <dbReference type="ChEBI" id="CHEBI:60240"/>
    </ligand>
</feature>
<feature type="binding site" evidence="1">
    <location>
        <position position="39"/>
    </location>
    <ligand>
        <name>a divalent metal cation</name>
        <dbReference type="ChEBI" id="CHEBI:60240"/>
    </ligand>
</feature>
<feature type="binding site" evidence="1">
    <location>
        <position position="92"/>
    </location>
    <ligand>
        <name>a divalent metal cation</name>
        <dbReference type="ChEBI" id="CHEBI:60240"/>
    </ligand>
</feature>
<accession>A1V4L3</accession>
<organism>
    <name type="scientific">Burkholderia mallei (strain SAVP1)</name>
    <dbReference type="NCBI Taxonomy" id="320388"/>
    <lineage>
        <taxon>Bacteria</taxon>
        <taxon>Pseudomonadati</taxon>
        <taxon>Pseudomonadota</taxon>
        <taxon>Betaproteobacteria</taxon>
        <taxon>Burkholderiales</taxon>
        <taxon>Burkholderiaceae</taxon>
        <taxon>Burkholderia</taxon>
        <taxon>pseudomallei group</taxon>
    </lineage>
</organism>
<name>SURE_BURMS</name>
<reference key="1">
    <citation type="journal article" date="2010" name="Genome Biol. Evol.">
        <title>Continuing evolution of Burkholderia mallei through genome reduction and large-scale rearrangements.</title>
        <authorList>
            <person name="Losada L."/>
            <person name="Ronning C.M."/>
            <person name="DeShazer D."/>
            <person name="Woods D."/>
            <person name="Fedorova N."/>
            <person name="Kim H.S."/>
            <person name="Shabalina S.A."/>
            <person name="Pearson T.R."/>
            <person name="Brinkac L."/>
            <person name="Tan P."/>
            <person name="Nandi T."/>
            <person name="Crabtree J."/>
            <person name="Badger J."/>
            <person name="Beckstrom-Sternberg S."/>
            <person name="Saqib M."/>
            <person name="Schutzer S.E."/>
            <person name="Keim P."/>
            <person name="Nierman W.C."/>
        </authorList>
    </citation>
    <scope>NUCLEOTIDE SEQUENCE [LARGE SCALE GENOMIC DNA]</scope>
    <source>
        <strain>SAVP1</strain>
    </source>
</reference>
<evidence type="ECO:0000255" key="1">
    <source>
        <dbReference type="HAMAP-Rule" id="MF_00060"/>
    </source>
</evidence>
<proteinExistence type="inferred from homology"/>
<dbReference type="EC" id="3.1.3.5" evidence="1"/>
<dbReference type="EMBL" id="CP000526">
    <property type="protein sequence ID" value="ABM50694.1"/>
    <property type="molecule type" value="Genomic_DNA"/>
</dbReference>
<dbReference type="RefSeq" id="WP_004198595.1">
    <property type="nucleotide sequence ID" value="NC_008785.1"/>
</dbReference>
<dbReference type="SMR" id="A1V4L3"/>
<dbReference type="GeneID" id="92979090"/>
<dbReference type="KEGG" id="bmv:BMASAVP1_A1847"/>
<dbReference type="HOGENOM" id="CLU_045192_1_2_4"/>
<dbReference type="GO" id="GO:0005737">
    <property type="term" value="C:cytoplasm"/>
    <property type="evidence" value="ECO:0007669"/>
    <property type="project" value="UniProtKB-SubCell"/>
</dbReference>
<dbReference type="GO" id="GO:0008254">
    <property type="term" value="F:3'-nucleotidase activity"/>
    <property type="evidence" value="ECO:0007669"/>
    <property type="project" value="TreeGrafter"/>
</dbReference>
<dbReference type="GO" id="GO:0008253">
    <property type="term" value="F:5'-nucleotidase activity"/>
    <property type="evidence" value="ECO:0007669"/>
    <property type="project" value="UniProtKB-UniRule"/>
</dbReference>
<dbReference type="GO" id="GO:0004309">
    <property type="term" value="F:exopolyphosphatase activity"/>
    <property type="evidence" value="ECO:0007669"/>
    <property type="project" value="TreeGrafter"/>
</dbReference>
<dbReference type="GO" id="GO:0046872">
    <property type="term" value="F:metal ion binding"/>
    <property type="evidence" value="ECO:0007669"/>
    <property type="project" value="UniProtKB-UniRule"/>
</dbReference>
<dbReference type="GO" id="GO:0000166">
    <property type="term" value="F:nucleotide binding"/>
    <property type="evidence" value="ECO:0007669"/>
    <property type="project" value="UniProtKB-KW"/>
</dbReference>
<dbReference type="FunFam" id="3.40.1210.10:FF:000001">
    <property type="entry name" value="5'/3'-nucleotidase SurE"/>
    <property type="match status" value="1"/>
</dbReference>
<dbReference type="Gene3D" id="3.40.1210.10">
    <property type="entry name" value="Survival protein SurE-like phosphatase/nucleotidase"/>
    <property type="match status" value="1"/>
</dbReference>
<dbReference type="HAMAP" id="MF_00060">
    <property type="entry name" value="SurE"/>
    <property type="match status" value="1"/>
</dbReference>
<dbReference type="InterPro" id="IPR030048">
    <property type="entry name" value="SurE"/>
</dbReference>
<dbReference type="InterPro" id="IPR002828">
    <property type="entry name" value="SurE-like_Pase/nucleotidase"/>
</dbReference>
<dbReference type="InterPro" id="IPR036523">
    <property type="entry name" value="SurE-like_sf"/>
</dbReference>
<dbReference type="NCBIfam" id="NF001489">
    <property type="entry name" value="PRK00346.1-3"/>
    <property type="match status" value="1"/>
</dbReference>
<dbReference type="NCBIfam" id="NF001490">
    <property type="entry name" value="PRK00346.1-4"/>
    <property type="match status" value="1"/>
</dbReference>
<dbReference type="NCBIfam" id="TIGR00087">
    <property type="entry name" value="surE"/>
    <property type="match status" value="1"/>
</dbReference>
<dbReference type="PANTHER" id="PTHR30457">
    <property type="entry name" value="5'-NUCLEOTIDASE SURE"/>
    <property type="match status" value="1"/>
</dbReference>
<dbReference type="PANTHER" id="PTHR30457:SF12">
    <property type="entry name" value="5'_3'-NUCLEOTIDASE SURE"/>
    <property type="match status" value="1"/>
</dbReference>
<dbReference type="Pfam" id="PF01975">
    <property type="entry name" value="SurE"/>
    <property type="match status" value="1"/>
</dbReference>
<dbReference type="SUPFAM" id="SSF64167">
    <property type="entry name" value="SurE-like"/>
    <property type="match status" value="1"/>
</dbReference>
<keyword id="KW-0963">Cytoplasm</keyword>
<keyword id="KW-0378">Hydrolase</keyword>
<keyword id="KW-0479">Metal-binding</keyword>
<keyword id="KW-0547">Nucleotide-binding</keyword>
<comment type="function">
    <text evidence="1">Nucleotidase that shows phosphatase activity on nucleoside 5'-monophosphates.</text>
</comment>
<comment type="catalytic activity">
    <reaction evidence="1">
        <text>a ribonucleoside 5'-phosphate + H2O = a ribonucleoside + phosphate</text>
        <dbReference type="Rhea" id="RHEA:12484"/>
        <dbReference type="ChEBI" id="CHEBI:15377"/>
        <dbReference type="ChEBI" id="CHEBI:18254"/>
        <dbReference type="ChEBI" id="CHEBI:43474"/>
        <dbReference type="ChEBI" id="CHEBI:58043"/>
        <dbReference type="EC" id="3.1.3.5"/>
    </reaction>
</comment>
<comment type="cofactor">
    <cofactor evidence="1">
        <name>a divalent metal cation</name>
        <dbReference type="ChEBI" id="CHEBI:60240"/>
    </cofactor>
    <text evidence="1">Binds 1 divalent metal cation per subunit.</text>
</comment>
<comment type="subcellular location">
    <subcellularLocation>
        <location evidence="1">Cytoplasm</location>
    </subcellularLocation>
</comment>
<comment type="similarity">
    <text evidence="1">Belongs to the SurE nucleotidase family.</text>
</comment>
<gene>
    <name evidence="1" type="primary">surE</name>
    <name type="ordered locus">BMASAVP1_A1847</name>
</gene>